<evidence type="ECO:0000255" key="1">
    <source>
        <dbReference type="HAMAP-Rule" id="MF_00169"/>
    </source>
</evidence>
<feature type="chain" id="PRO_1000097607" description="3-dehydroquinate dehydratase">
    <location>
        <begin position="1"/>
        <end position="149"/>
    </location>
</feature>
<feature type="active site" description="Proton acceptor" evidence="1">
    <location>
        <position position="22"/>
    </location>
</feature>
<feature type="active site" description="Proton donor" evidence="1">
    <location>
        <position position="100"/>
    </location>
</feature>
<feature type="binding site" evidence="1">
    <location>
        <position position="74"/>
    </location>
    <ligand>
        <name>substrate</name>
    </ligand>
</feature>
<feature type="binding site" evidence="1">
    <location>
        <position position="80"/>
    </location>
    <ligand>
        <name>substrate</name>
    </ligand>
</feature>
<feature type="binding site" evidence="1">
    <location>
        <position position="87"/>
    </location>
    <ligand>
        <name>substrate</name>
    </ligand>
</feature>
<feature type="binding site" evidence="1">
    <location>
        <begin position="101"/>
        <end position="102"/>
    </location>
    <ligand>
        <name>substrate</name>
    </ligand>
</feature>
<feature type="binding site" evidence="1">
    <location>
        <position position="111"/>
    </location>
    <ligand>
        <name>substrate</name>
    </ligand>
</feature>
<feature type="site" description="Transition state stabilizer" evidence="1">
    <location>
        <position position="17"/>
    </location>
</feature>
<organism>
    <name type="scientific">Leptothrix cholodnii (strain ATCC 51168 / LMG 8142 / SP-6)</name>
    <name type="common">Leptothrix discophora (strain SP-6)</name>
    <dbReference type="NCBI Taxonomy" id="395495"/>
    <lineage>
        <taxon>Bacteria</taxon>
        <taxon>Pseudomonadati</taxon>
        <taxon>Pseudomonadota</taxon>
        <taxon>Betaproteobacteria</taxon>
        <taxon>Burkholderiales</taxon>
        <taxon>Sphaerotilaceae</taxon>
        <taxon>Leptothrix</taxon>
    </lineage>
</organism>
<proteinExistence type="inferred from homology"/>
<comment type="function">
    <text evidence="1">Catalyzes a trans-dehydration via an enolate intermediate.</text>
</comment>
<comment type="catalytic activity">
    <reaction evidence="1">
        <text>3-dehydroquinate = 3-dehydroshikimate + H2O</text>
        <dbReference type="Rhea" id="RHEA:21096"/>
        <dbReference type="ChEBI" id="CHEBI:15377"/>
        <dbReference type="ChEBI" id="CHEBI:16630"/>
        <dbReference type="ChEBI" id="CHEBI:32364"/>
        <dbReference type="EC" id="4.2.1.10"/>
    </reaction>
</comment>
<comment type="pathway">
    <text evidence="1">Metabolic intermediate biosynthesis; chorismate biosynthesis; chorismate from D-erythrose 4-phosphate and phosphoenolpyruvate: step 3/7.</text>
</comment>
<comment type="subunit">
    <text evidence="1">Homododecamer.</text>
</comment>
<comment type="similarity">
    <text evidence="1">Belongs to the type-II 3-dehydroquinase family.</text>
</comment>
<name>AROQ_LEPCP</name>
<reference key="1">
    <citation type="submission" date="2008-03" db="EMBL/GenBank/DDBJ databases">
        <title>Complete sequence of Leptothrix cholodnii SP-6.</title>
        <authorList>
            <consortium name="US DOE Joint Genome Institute"/>
            <person name="Copeland A."/>
            <person name="Lucas S."/>
            <person name="Lapidus A."/>
            <person name="Glavina del Rio T."/>
            <person name="Dalin E."/>
            <person name="Tice H."/>
            <person name="Bruce D."/>
            <person name="Goodwin L."/>
            <person name="Pitluck S."/>
            <person name="Chertkov O."/>
            <person name="Brettin T."/>
            <person name="Detter J.C."/>
            <person name="Han C."/>
            <person name="Kuske C.R."/>
            <person name="Schmutz J."/>
            <person name="Larimer F."/>
            <person name="Land M."/>
            <person name="Hauser L."/>
            <person name="Kyrpides N."/>
            <person name="Lykidis A."/>
            <person name="Emerson D."/>
            <person name="Richardson P."/>
        </authorList>
    </citation>
    <scope>NUCLEOTIDE SEQUENCE [LARGE SCALE GENOMIC DNA]</scope>
    <source>
        <strain>ATCC 51168 / LMG 8142 / SP-6</strain>
    </source>
</reference>
<gene>
    <name evidence="1" type="primary">aroQ</name>
    <name type="ordered locus">Lcho_0417</name>
</gene>
<protein>
    <recommendedName>
        <fullName evidence="1">3-dehydroquinate dehydratase</fullName>
        <shortName evidence="1">3-dehydroquinase</shortName>
        <ecNumber evidence="1">4.2.1.10</ecNumber>
    </recommendedName>
    <alternativeName>
        <fullName evidence="1">Type II DHQase</fullName>
    </alternativeName>
</protein>
<sequence length="149" mass="16249">MNILVLNGINLNMFGKRDPKQYGTITLAQIDEQLDALGAELGATVQHFQSNHEGEMAERIHQAHVDNVDAVLINAGAWTHYSYGIRDALAILKCPIVEVHMSNIHAREPFRHHSVIAEIARGQIAGFGVDSYLMGLRAAVNLVNAAKAG</sequence>
<dbReference type="EC" id="4.2.1.10" evidence="1"/>
<dbReference type="EMBL" id="CP001013">
    <property type="protein sequence ID" value="ACB32692.1"/>
    <property type="molecule type" value="Genomic_DNA"/>
</dbReference>
<dbReference type="RefSeq" id="WP_012345454.1">
    <property type="nucleotide sequence ID" value="NC_010524.1"/>
</dbReference>
<dbReference type="SMR" id="B1XX46"/>
<dbReference type="STRING" id="395495.Lcho_0417"/>
<dbReference type="KEGG" id="lch:Lcho_0417"/>
<dbReference type="eggNOG" id="COG0757">
    <property type="taxonomic scope" value="Bacteria"/>
</dbReference>
<dbReference type="HOGENOM" id="CLU_090968_1_0_4"/>
<dbReference type="OrthoDB" id="9790793at2"/>
<dbReference type="UniPathway" id="UPA00053">
    <property type="reaction ID" value="UER00086"/>
</dbReference>
<dbReference type="Proteomes" id="UP000001693">
    <property type="component" value="Chromosome"/>
</dbReference>
<dbReference type="GO" id="GO:0003855">
    <property type="term" value="F:3-dehydroquinate dehydratase activity"/>
    <property type="evidence" value="ECO:0007669"/>
    <property type="project" value="UniProtKB-UniRule"/>
</dbReference>
<dbReference type="GO" id="GO:0008652">
    <property type="term" value="P:amino acid biosynthetic process"/>
    <property type="evidence" value="ECO:0007669"/>
    <property type="project" value="UniProtKB-KW"/>
</dbReference>
<dbReference type="GO" id="GO:0009073">
    <property type="term" value="P:aromatic amino acid family biosynthetic process"/>
    <property type="evidence" value="ECO:0007669"/>
    <property type="project" value="UniProtKB-KW"/>
</dbReference>
<dbReference type="GO" id="GO:0009423">
    <property type="term" value="P:chorismate biosynthetic process"/>
    <property type="evidence" value="ECO:0007669"/>
    <property type="project" value="UniProtKB-UniRule"/>
</dbReference>
<dbReference type="GO" id="GO:0019631">
    <property type="term" value="P:quinate catabolic process"/>
    <property type="evidence" value="ECO:0007669"/>
    <property type="project" value="TreeGrafter"/>
</dbReference>
<dbReference type="CDD" id="cd00466">
    <property type="entry name" value="DHQase_II"/>
    <property type="match status" value="1"/>
</dbReference>
<dbReference type="Gene3D" id="3.40.50.9100">
    <property type="entry name" value="Dehydroquinase, class II"/>
    <property type="match status" value="1"/>
</dbReference>
<dbReference type="HAMAP" id="MF_00169">
    <property type="entry name" value="AroQ"/>
    <property type="match status" value="1"/>
</dbReference>
<dbReference type="InterPro" id="IPR001874">
    <property type="entry name" value="DHquinase_II"/>
</dbReference>
<dbReference type="InterPro" id="IPR036441">
    <property type="entry name" value="DHquinase_II_sf"/>
</dbReference>
<dbReference type="NCBIfam" id="TIGR01088">
    <property type="entry name" value="aroQ"/>
    <property type="match status" value="1"/>
</dbReference>
<dbReference type="NCBIfam" id="NF003805">
    <property type="entry name" value="PRK05395.1-2"/>
    <property type="match status" value="1"/>
</dbReference>
<dbReference type="NCBIfam" id="NF003806">
    <property type="entry name" value="PRK05395.1-3"/>
    <property type="match status" value="1"/>
</dbReference>
<dbReference type="NCBIfam" id="NF003807">
    <property type="entry name" value="PRK05395.1-4"/>
    <property type="match status" value="1"/>
</dbReference>
<dbReference type="PANTHER" id="PTHR21272">
    <property type="entry name" value="CATABOLIC 3-DEHYDROQUINASE"/>
    <property type="match status" value="1"/>
</dbReference>
<dbReference type="PANTHER" id="PTHR21272:SF3">
    <property type="entry name" value="CATABOLIC 3-DEHYDROQUINASE"/>
    <property type="match status" value="1"/>
</dbReference>
<dbReference type="Pfam" id="PF01220">
    <property type="entry name" value="DHquinase_II"/>
    <property type="match status" value="1"/>
</dbReference>
<dbReference type="PIRSF" id="PIRSF001399">
    <property type="entry name" value="DHquinase_II"/>
    <property type="match status" value="1"/>
</dbReference>
<dbReference type="SUPFAM" id="SSF52304">
    <property type="entry name" value="Type II 3-dehydroquinate dehydratase"/>
    <property type="match status" value="1"/>
</dbReference>
<keyword id="KW-0028">Amino-acid biosynthesis</keyword>
<keyword id="KW-0057">Aromatic amino acid biosynthesis</keyword>
<keyword id="KW-0456">Lyase</keyword>
<keyword id="KW-1185">Reference proteome</keyword>
<accession>B1XX46</accession>